<feature type="chain" id="PRO_0000290201" description="BEN domain-containing protein 3">
    <location>
        <begin position="1"/>
        <end position="825"/>
    </location>
</feature>
<feature type="domain" description="BEN 1" evidence="2">
    <location>
        <begin position="239"/>
        <end position="340"/>
    </location>
</feature>
<feature type="domain" description="BEN 2" evidence="2">
    <location>
        <begin position="384"/>
        <end position="484"/>
    </location>
</feature>
<feature type="domain" description="BEN 3" evidence="2">
    <location>
        <begin position="547"/>
        <end position="647"/>
    </location>
</feature>
<feature type="domain" description="BEN 4" evidence="2">
    <location>
        <begin position="712"/>
        <end position="813"/>
    </location>
</feature>
<feature type="region of interest" description="Disordered" evidence="3">
    <location>
        <begin position="1"/>
        <end position="35"/>
    </location>
</feature>
<feature type="region of interest" description="Disordered" evidence="3">
    <location>
        <begin position="52"/>
        <end position="122"/>
    </location>
</feature>
<feature type="short sequence motif" description="Nuclear localization signal" evidence="1">
    <location>
        <begin position="54"/>
        <end position="56"/>
    </location>
</feature>
<feature type="compositionally biased region" description="Acidic residues" evidence="3">
    <location>
        <begin position="1"/>
        <end position="11"/>
    </location>
</feature>
<feature type="modified residue" description="Phosphoserine" evidence="1">
    <location>
        <position position="376"/>
    </location>
</feature>
<feature type="modified residue" description="Phosphoserine" evidence="1">
    <location>
        <position position="486"/>
    </location>
</feature>
<feature type="cross-link" description="Glycyl lysine isopeptide (Lys-Gly) (interchain with G-Cter in SUMO); alternate" evidence="1">
    <location>
        <position position="20"/>
    </location>
</feature>
<feature type="cross-link" description="Glycyl lysine isopeptide (Lys-Gly) (interchain with G-Cter in SUMO1); alternate" evidence="1">
    <location>
        <position position="20"/>
    </location>
</feature>
<feature type="cross-link" description="Glycyl lysine isopeptide (Lys-Gly) (interchain with G-Cter in SUMO2); alternate" evidence="1">
    <location>
        <position position="20"/>
    </location>
</feature>
<feature type="cross-link" description="Glycyl lysine isopeptide (Lys-Gly) (interchain with G-Cter in SUMO2)" evidence="1">
    <location>
        <position position="39"/>
    </location>
</feature>
<feature type="cross-link" description="Glycyl lysine isopeptide (Lys-Gly) (interchain with G-Cter in SUMO2)" evidence="1">
    <location>
        <position position="54"/>
    </location>
</feature>
<feature type="cross-link" description="Glycyl lysine isopeptide (Lys-Gly) (interchain with G-Cter in SUMO2)" evidence="1">
    <location>
        <position position="56"/>
    </location>
</feature>
<feature type="cross-link" description="Glycyl lysine isopeptide (Lys-Gly) (interchain with G-Cter in SUMO2)" evidence="1">
    <location>
        <position position="71"/>
    </location>
</feature>
<feature type="cross-link" description="Glycyl lysine isopeptide (Lys-Gly) (interchain with G-Cter in SUMO2)" evidence="1">
    <location>
        <position position="126"/>
    </location>
</feature>
<feature type="cross-link" description="Glycyl lysine isopeptide (Lys-Gly) (interchain with G-Cter in SUMO2)" evidence="1">
    <location>
        <position position="127"/>
    </location>
</feature>
<feature type="cross-link" description="Glycyl lysine isopeptide (Lys-Gly) (interchain with G-Cter in SUMO2)" evidence="1">
    <location>
        <position position="135"/>
    </location>
</feature>
<feature type="cross-link" description="Glycyl lysine isopeptide (Lys-Gly) (interchain with G-Cter in SUMO2)" evidence="1">
    <location>
        <position position="140"/>
    </location>
</feature>
<feature type="cross-link" description="Glycyl lysine isopeptide (Lys-Gly) (interchain with G-Cter in SUMO2)" evidence="1">
    <location>
        <position position="156"/>
    </location>
</feature>
<feature type="cross-link" description="Glycyl lysine isopeptide (Lys-Gly) (interchain with G-Cter in SUMO2)" evidence="1">
    <location>
        <position position="174"/>
    </location>
</feature>
<feature type="cross-link" description="Glycyl lysine isopeptide (Lys-Gly) (interchain with G-Cter in SUMO2)" evidence="1">
    <location>
        <position position="424"/>
    </location>
</feature>
<feature type="cross-link" description="Glycyl lysine isopeptide (Lys-Gly) (interchain with G-Cter in SUMO); alternate" evidence="1">
    <location>
        <position position="509"/>
    </location>
</feature>
<feature type="cross-link" description="Glycyl lysine isopeptide (Lys-Gly) (interchain with G-Cter in SUMO2); alternate" evidence="1">
    <location>
        <position position="509"/>
    </location>
</feature>
<feature type="cross-link" description="Glycyl lysine isopeptide (Lys-Gly) (interchain with G-Cter in SUMO2)" evidence="1">
    <location>
        <position position="525"/>
    </location>
</feature>
<feature type="cross-link" description="Glycyl lysine isopeptide (Lys-Gly) (interchain with G-Cter in SUMO2)" evidence="1">
    <location>
        <position position="697"/>
    </location>
</feature>
<feature type="helix" evidence="7">
    <location>
        <begin position="554"/>
        <end position="562"/>
    </location>
</feature>
<feature type="strand" evidence="7">
    <location>
        <begin position="564"/>
        <end position="566"/>
    </location>
</feature>
<feature type="helix" evidence="7">
    <location>
        <begin position="567"/>
        <end position="578"/>
    </location>
</feature>
<feature type="helix" evidence="7">
    <location>
        <begin position="580"/>
        <end position="582"/>
    </location>
</feature>
<feature type="helix" evidence="7">
    <location>
        <begin position="588"/>
        <end position="591"/>
    </location>
</feature>
<feature type="strand" evidence="7">
    <location>
        <begin position="592"/>
        <end position="595"/>
    </location>
</feature>
<feature type="helix" evidence="7">
    <location>
        <begin position="605"/>
        <end position="618"/>
    </location>
</feature>
<feature type="helix" evidence="7">
    <location>
        <begin position="620"/>
        <end position="623"/>
    </location>
</feature>
<feature type="helix" evidence="7">
    <location>
        <begin position="625"/>
        <end position="631"/>
    </location>
</feature>
<feature type="helix" evidence="7">
    <location>
        <begin position="633"/>
        <end position="641"/>
    </location>
</feature>
<feature type="helix" evidence="5">
    <location>
        <begin position="720"/>
        <end position="729"/>
    </location>
</feature>
<feature type="helix" evidence="5">
    <location>
        <begin position="733"/>
        <end position="744"/>
    </location>
</feature>
<feature type="helix" evidence="5">
    <location>
        <begin position="746"/>
        <end position="748"/>
    </location>
</feature>
<feature type="helix" evidence="5">
    <location>
        <begin position="754"/>
        <end position="757"/>
    </location>
</feature>
<feature type="strand" evidence="6">
    <location>
        <begin position="758"/>
        <end position="761"/>
    </location>
</feature>
<feature type="helix" evidence="5">
    <location>
        <begin position="771"/>
        <end position="783"/>
    </location>
</feature>
<feature type="helix" evidence="5">
    <location>
        <begin position="785"/>
        <end position="796"/>
    </location>
</feature>
<feature type="helix" evidence="5">
    <location>
        <begin position="798"/>
        <end position="807"/>
    </location>
</feature>
<feature type="helix" evidence="5">
    <location>
        <begin position="813"/>
        <end position="817"/>
    </location>
</feature>
<dbReference type="EMBL" id="BC060240">
    <property type="protein sequence ID" value="AAH60240.1"/>
    <property type="molecule type" value="mRNA"/>
</dbReference>
<dbReference type="EMBL" id="AK122525">
    <property type="protein sequence ID" value="BAC65807.1"/>
    <property type="molecule type" value="mRNA"/>
</dbReference>
<dbReference type="CCDS" id="CCDS35892.1"/>
<dbReference type="RefSeq" id="NP_001346529.1">
    <property type="nucleotide sequence ID" value="NM_001359600.1"/>
</dbReference>
<dbReference type="RefSeq" id="NP_001346530.1">
    <property type="nucleotide sequence ID" value="NM_001359601.1"/>
</dbReference>
<dbReference type="RefSeq" id="NP_950193.1">
    <property type="nucleotide sequence ID" value="NM_199028.2"/>
</dbReference>
<dbReference type="RefSeq" id="XP_006512832.1">
    <property type="nucleotide sequence ID" value="XM_006512769.3"/>
</dbReference>
<dbReference type="RefSeq" id="XP_006512833.1">
    <property type="nucleotide sequence ID" value="XM_006512770.5"/>
</dbReference>
<dbReference type="RefSeq" id="XP_006512834.1">
    <property type="nucleotide sequence ID" value="XM_006512771.3"/>
</dbReference>
<dbReference type="RefSeq" id="XP_030101006.1">
    <property type="nucleotide sequence ID" value="XM_030245146.2"/>
</dbReference>
<dbReference type="RefSeq" id="XP_030101007.1">
    <property type="nucleotide sequence ID" value="XM_030245147.2"/>
</dbReference>
<dbReference type="PDB" id="7V9F">
    <property type="method" value="X-ray"/>
    <property type="resolution" value="2.50 A"/>
    <property type="chains" value="A=712-825"/>
</dbReference>
<dbReference type="PDB" id="7V9G">
    <property type="method" value="X-ray"/>
    <property type="resolution" value="3.50 A"/>
    <property type="chains" value="A/D/G/J=712-825"/>
</dbReference>
<dbReference type="PDB" id="7V9H">
    <property type="method" value="X-ray"/>
    <property type="resolution" value="2.69 A"/>
    <property type="chains" value="A=547-647"/>
</dbReference>
<dbReference type="PDB" id="7V9I">
    <property type="method" value="X-ray"/>
    <property type="resolution" value="3.50 A"/>
    <property type="chains" value="A=712-825"/>
</dbReference>
<dbReference type="PDBsum" id="7V9F"/>
<dbReference type="PDBsum" id="7V9G"/>
<dbReference type="PDBsum" id="7V9H"/>
<dbReference type="PDBsum" id="7V9I"/>
<dbReference type="SMR" id="Q6PAL0"/>
<dbReference type="BioGRID" id="237119">
    <property type="interactions" value="2"/>
</dbReference>
<dbReference type="FunCoup" id="Q6PAL0">
    <property type="interactions" value="1766"/>
</dbReference>
<dbReference type="IntAct" id="Q6PAL0">
    <property type="interactions" value="2"/>
</dbReference>
<dbReference type="STRING" id="10090.ENSMUSP00000127351"/>
<dbReference type="iPTMnet" id="Q6PAL0"/>
<dbReference type="PhosphoSitePlus" id="Q6PAL0"/>
<dbReference type="PaxDb" id="10090-ENSMUSP00000127351"/>
<dbReference type="PeptideAtlas" id="Q6PAL0"/>
<dbReference type="ProteomicsDB" id="273602"/>
<dbReference type="Pumba" id="Q6PAL0"/>
<dbReference type="Antibodypedia" id="2976">
    <property type="antibodies" value="115 antibodies from 19 providers"/>
</dbReference>
<dbReference type="DNASU" id="331623"/>
<dbReference type="Ensembl" id="ENSMUST00000167488.9">
    <property type="protein sequence ID" value="ENSMUSP00000127351.2"/>
    <property type="gene ID" value="ENSMUSG00000038214.17"/>
</dbReference>
<dbReference type="GeneID" id="331623"/>
<dbReference type="KEGG" id="mmu:331623"/>
<dbReference type="UCSC" id="uc011xdl.1">
    <property type="organism name" value="mouse"/>
</dbReference>
<dbReference type="AGR" id="MGI:2677212"/>
<dbReference type="CTD" id="57673"/>
<dbReference type="MGI" id="MGI:2677212">
    <property type="gene designation" value="Bend3"/>
</dbReference>
<dbReference type="VEuPathDB" id="HostDB:ENSMUSG00000038214"/>
<dbReference type="eggNOG" id="ENOG502QQWG">
    <property type="taxonomic scope" value="Eukaryota"/>
</dbReference>
<dbReference type="GeneTree" id="ENSGT00390000010827"/>
<dbReference type="HOGENOM" id="CLU_017582_0_0_1"/>
<dbReference type="InParanoid" id="Q6PAL0"/>
<dbReference type="OMA" id="AEHPQTY"/>
<dbReference type="OrthoDB" id="9927103at2759"/>
<dbReference type="PhylomeDB" id="Q6PAL0"/>
<dbReference type="TreeFam" id="TF300204"/>
<dbReference type="BioGRID-ORCS" id="331623">
    <property type="hits" value="6 hits in 81 CRISPR screens"/>
</dbReference>
<dbReference type="PRO" id="PR:Q6PAL0"/>
<dbReference type="Proteomes" id="UP000000589">
    <property type="component" value="Chromosome 10"/>
</dbReference>
<dbReference type="RNAct" id="Q6PAL0">
    <property type="molecule type" value="protein"/>
</dbReference>
<dbReference type="Bgee" id="ENSMUSG00000038214">
    <property type="expression patterns" value="Expressed in primitive streak and 209 other cell types or tissues"/>
</dbReference>
<dbReference type="ExpressionAtlas" id="Q6PAL0">
    <property type="expression patterns" value="baseline and differential"/>
</dbReference>
<dbReference type="GO" id="GO:0000792">
    <property type="term" value="C:heterochromatin"/>
    <property type="evidence" value="ECO:0000250"/>
    <property type="project" value="UniProtKB"/>
</dbReference>
<dbReference type="GO" id="GO:0005730">
    <property type="term" value="C:nucleolus"/>
    <property type="evidence" value="ECO:0000250"/>
    <property type="project" value="UniProtKB"/>
</dbReference>
<dbReference type="GO" id="GO:0005654">
    <property type="term" value="C:nucleoplasm"/>
    <property type="evidence" value="ECO:0007669"/>
    <property type="project" value="Ensembl"/>
</dbReference>
<dbReference type="GO" id="GO:0000182">
    <property type="term" value="F:rDNA binding"/>
    <property type="evidence" value="ECO:0000250"/>
    <property type="project" value="UniProtKB"/>
</dbReference>
<dbReference type="GO" id="GO:0006346">
    <property type="term" value="P:DNA methylation-dependent constitutive heterochromatin formation"/>
    <property type="evidence" value="ECO:0007669"/>
    <property type="project" value="Ensembl"/>
</dbReference>
<dbReference type="GO" id="GO:0000122">
    <property type="term" value="P:negative regulation of transcription by RNA polymerase II"/>
    <property type="evidence" value="ECO:0000250"/>
    <property type="project" value="UniProtKB"/>
</dbReference>
<dbReference type="GO" id="GO:1903580">
    <property type="term" value="P:positive regulation of ATP metabolic process"/>
    <property type="evidence" value="ECO:0000250"/>
    <property type="project" value="UniProtKB"/>
</dbReference>
<dbReference type="GO" id="GO:0051260">
    <property type="term" value="P:protein homooligomerization"/>
    <property type="evidence" value="ECO:0000250"/>
    <property type="project" value="UniProtKB"/>
</dbReference>
<dbReference type="GO" id="GO:0000183">
    <property type="term" value="P:rDNA heterochromatin formation"/>
    <property type="evidence" value="ECO:0000250"/>
    <property type="project" value="UniProtKB"/>
</dbReference>
<dbReference type="InterPro" id="IPR018379">
    <property type="entry name" value="BEN_domain"/>
</dbReference>
<dbReference type="InterPro" id="IPR033583">
    <property type="entry name" value="BEND3"/>
</dbReference>
<dbReference type="PANTHER" id="PTHR28665">
    <property type="entry name" value="BEN DOMAIN-CONTAINING PROTEIN 3"/>
    <property type="match status" value="1"/>
</dbReference>
<dbReference type="PANTHER" id="PTHR28665:SF1">
    <property type="entry name" value="BEN DOMAIN-CONTAINING PROTEIN 3"/>
    <property type="match status" value="1"/>
</dbReference>
<dbReference type="Pfam" id="PF10523">
    <property type="entry name" value="BEN"/>
    <property type="match status" value="4"/>
</dbReference>
<dbReference type="SMART" id="SM01025">
    <property type="entry name" value="BEN"/>
    <property type="match status" value="4"/>
</dbReference>
<dbReference type="PROSITE" id="PS51457">
    <property type="entry name" value="BEN"/>
    <property type="match status" value="4"/>
</dbReference>
<accession>Q6PAL0</accession>
<accession>Q80TC0</accession>
<organism>
    <name type="scientific">Mus musculus</name>
    <name type="common">Mouse</name>
    <dbReference type="NCBI Taxonomy" id="10090"/>
    <lineage>
        <taxon>Eukaryota</taxon>
        <taxon>Metazoa</taxon>
        <taxon>Chordata</taxon>
        <taxon>Craniata</taxon>
        <taxon>Vertebrata</taxon>
        <taxon>Euteleostomi</taxon>
        <taxon>Mammalia</taxon>
        <taxon>Eutheria</taxon>
        <taxon>Euarchontoglires</taxon>
        <taxon>Glires</taxon>
        <taxon>Rodentia</taxon>
        <taxon>Myomorpha</taxon>
        <taxon>Muroidea</taxon>
        <taxon>Muridae</taxon>
        <taxon>Murinae</taxon>
        <taxon>Mus</taxon>
        <taxon>Mus</taxon>
    </lineage>
</organism>
<proteinExistence type="evidence at protein level"/>
<sequence>MNSTEISEDVEEVLKNNPVKAEGSDATLDCSRNSRASEKHLLESVLTALHDSSKRKQLDSDGQPDSVPSVKRRRLIPEALLAGMRTRENSSPCQGNGEPASRGRSGSCAWPAEEEPSTEATVPSYKKPLYGISHKIMEKKNPPSGDLLSPYELFEKANSSSGPSPLRLLSESQKRECGVGVATDGDLNIYFLIQKMFYMLNGLTTNMSQLHSKMDLLSLEVSRVKKQVSPSELVAKFQPPPEYQLTASELKQIAEQSLSCGDLACRLLLQLFPELFSDVDFSRGCSACGFAAKRKLESLHLQLIRNYVEVYYPNVKDTAVWQAECLPQLNDFFSRFWAQREMEDSQPGGQVTNFFEADQVDAGHFLDNKDQEEALSLDRSSTIASDHVVDTQDLTEFLDEASSPGEFAVFLLHRLFPELFDHRKLGEQYSCYGDGGKQELDPQRLQIIRNYTEIYFPDMQEEEAWLQQCAQRINDELEGLGLEGGSEGEAPRDDCYDSSSLPDDISVVKVEDNFEGERPGRRSKKIWLVPIDFDKLEIPQPDFEMPGSDCLLSKEQLRSIYESSLSIGNFASRLLVHLFPELFTHENLRKQYNCSGSLGKKQLDPARIRLIRHYVQLLYPRAKNDRVWTLEFVGKLDERCRRRDTEQRRSYQQQRKVHVPGPECRDLASYAINPERFREEFEGPPLPPERSSKDFCKIPLDELVVPSPDFPVPSPYLLSDKEVREIVQQSLSVGNFAARLLVRLFPELFTTENLRLQYNHSGACNKKQLDPTRLRLIRHYVEAVYPVEKMEEVWHYECIPSIDERCRRPNRKKCDILKKAKKVEK</sequence>
<protein>
    <recommendedName>
        <fullName>BEN domain-containing protein 3</fullName>
    </recommendedName>
</protein>
<name>BEND3_MOUSE</name>
<reference key="1">
    <citation type="journal article" date="2004" name="Genome Res.">
        <title>The status, quality, and expansion of the NIH full-length cDNA project: the Mammalian Gene Collection (MGC).</title>
        <authorList>
            <consortium name="The MGC Project Team"/>
        </authorList>
    </citation>
    <scope>NUCLEOTIDE SEQUENCE [LARGE SCALE MRNA]</scope>
    <source>
        <strain>C57BL/6J</strain>
        <tissue>Brain</tissue>
    </source>
</reference>
<reference key="2">
    <citation type="journal article" date="2003" name="DNA Res.">
        <title>Prediction of the coding sequences of mouse homologues of KIAA gene: II. The complete nucleotide sequences of 400 mouse KIAA-homologous cDNAs identified by screening of terminal sequences of cDNA clones randomly sampled from size-fractionated libraries.</title>
        <authorList>
            <person name="Okazaki N."/>
            <person name="Kikuno R."/>
            <person name="Ohara R."/>
            <person name="Inamoto S."/>
            <person name="Aizawa H."/>
            <person name="Yuasa S."/>
            <person name="Nakajima D."/>
            <person name="Nagase T."/>
            <person name="Ohara O."/>
            <person name="Koga H."/>
        </authorList>
    </citation>
    <scope>NUCLEOTIDE SEQUENCE [LARGE SCALE MRNA] OF 51-825</scope>
    <source>
        <tissue>Brain</tissue>
    </source>
</reference>
<reference key="3">
    <citation type="journal article" date="2014" name="Mol. Cell">
        <title>Redundant mechanisms to form silent chromatin at pericentromeric regions rely on BEND3 and DNA methylation.</title>
        <authorList>
            <person name="Saksouk N."/>
            <person name="Barth T.K."/>
            <person name="Ziegler-Birling C."/>
            <person name="Olova N."/>
            <person name="Nowak A."/>
            <person name="Rey E."/>
            <person name="Mateos-Langerak J."/>
            <person name="Urbach S."/>
            <person name="Reik W."/>
            <person name="Torres-Padilla M.E."/>
            <person name="Imhof A."/>
            <person name="Dejardin J."/>
            <person name="Simboeck E."/>
        </authorList>
    </citation>
    <scope>FUNCTION</scope>
    <scope>SUBCELLULAR LOCATION</scope>
    <scope>INTERACTION WITH NURD COMPLEX</scope>
</reference>
<evidence type="ECO:0000250" key="1">
    <source>
        <dbReference type="UniProtKB" id="Q5T5X7"/>
    </source>
</evidence>
<evidence type="ECO:0000255" key="2">
    <source>
        <dbReference type="PROSITE-ProRule" id="PRU00784"/>
    </source>
</evidence>
<evidence type="ECO:0000256" key="3">
    <source>
        <dbReference type="SAM" id="MobiDB-lite"/>
    </source>
</evidence>
<evidence type="ECO:0000269" key="4">
    <source>
    </source>
</evidence>
<evidence type="ECO:0007829" key="5">
    <source>
        <dbReference type="PDB" id="7V9F"/>
    </source>
</evidence>
<evidence type="ECO:0007829" key="6">
    <source>
        <dbReference type="PDB" id="7V9G"/>
    </source>
</evidence>
<evidence type="ECO:0007829" key="7">
    <source>
        <dbReference type="PDB" id="7V9H"/>
    </source>
</evidence>
<keyword id="KW-0002">3D-structure</keyword>
<keyword id="KW-0156">Chromatin regulator</keyword>
<keyword id="KW-0238">DNA-binding</keyword>
<keyword id="KW-1017">Isopeptide bond</keyword>
<keyword id="KW-0539">Nucleus</keyword>
<keyword id="KW-0597">Phosphoprotein</keyword>
<keyword id="KW-1185">Reference proteome</keyword>
<keyword id="KW-0677">Repeat</keyword>
<keyword id="KW-0678">Repressor</keyword>
<keyword id="KW-0804">Transcription</keyword>
<keyword id="KW-0805">Transcription regulation</keyword>
<keyword id="KW-0832">Ubl conjugation</keyword>
<gene>
    <name type="primary">Bend3</name>
    <name type="synonym">Kiaa1553</name>
</gene>
<comment type="function">
    <text evidence="1 4">Transcriptional repressor which associates with the NoRC (nucleolar remodeling complex) complex and plays a key role in repressing rDNA transcription. The sumoylated form modulates the stability of the NoRC complex component BAZ2A/TIP5 by controlling its USP21-mediated deubiquitination (By similarity). Binds to unmethylated major satellite DNA and is involved in the recruitment of the Polycomb repressive complex 2 (PRC2) to major satellites (PubMed:25457167). Stimulates the ERCC6L translocase and ATPase activities (By similarity).</text>
</comment>
<comment type="subunit">
    <text evidence="1 4">Homooligomer, probably a homooctamer. Interacts with HDAC2 and HDAC3, but not HDAC1. Interacts with SALL4. Interacts with SMARCA5/SNF2H, BAZ2A/TIP5 and USP21 (By similarity). Interacts with the nucleosome remodeling and histone deacetylase (NuRD) repressor complex (PubMed:25457167). Interacts (via BEN domains 1 and 3) with ERCC6L (via N-terminal TPR repeat); the interaction is direct (By similarity).</text>
</comment>
<comment type="subcellular location">
    <subcellularLocation>
        <location evidence="1">Nucleus</location>
    </subcellularLocation>
    <subcellularLocation>
        <location evidence="1">Nucleus</location>
        <location evidence="1">Nucleolus</location>
    </subcellularLocation>
    <text evidence="1">In the nucleus, observed in heterochromatic foci containing CBX1, CBX3, CBX5 and histone H3 trimethylated at 'Lys-9'. Released from chromatin during decondensation. Association with heterochromatin does not depend on sumoylation.</text>
</comment>
<comment type="domain">
    <text evidence="1">The BEN domain 4 is necessary and sufficient for the localization of BEND3 to heterochromatic regions.</text>
</comment>
<comment type="PTM">
    <text evidence="1">Sumoylated at Lys-20 by SUMO1 and at Lys-509 by SUMO1, SUMO2 and SUMO3. Sumoylation probably occurs sequentially, with that of Lys-20 preceding that of Lys-509. It does not alter association with heterochromatin, but is required for the repression of transcription.</text>
</comment>